<protein>
    <recommendedName>
        <fullName evidence="1">Maturase K</fullName>
    </recommendedName>
    <alternativeName>
        <fullName evidence="1">Intron maturase</fullName>
    </alternativeName>
</protein>
<reference key="1">
    <citation type="journal article" date="2002" name="Mol. Phylogenet. Evol.">
        <title>Phylogenetics of asterids based on 3 coding and 3 non-coding chloroplast DNA markers and the utility of non-coding DNA at higher taxonomic levels.</title>
        <authorList>
            <person name="Bremer B."/>
            <person name="Bremer K."/>
            <person name="Heidari N."/>
            <person name="Erixon P."/>
            <person name="Olmstead R.G."/>
            <person name="Anderberg A.A."/>
            <person name="Kallersjo M."/>
            <person name="Barkhordarian E."/>
        </authorList>
    </citation>
    <scope>NUCLEOTIDE SEQUENCE [GENOMIC DNA]</scope>
</reference>
<gene>
    <name evidence="1" type="primary">matK</name>
</gene>
<keyword id="KW-0150">Chloroplast</keyword>
<keyword id="KW-0507">mRNA processing</keyword>
<keyword id="KW-0934">Plastid</keyword>
<keyword id="KW-0694">RNA-binding</keyword>
<keyword id="KW-0819">tRNA processing</keyword>
<sequence>MEEFKRYLELDRSQQHNFVYPLIFQEYIYALAHDHGLNKSILLENAGYDNKSSLLIVKRLITHLITQMYQQNHFIFSANDSNQNKIFGHNTNLYSQMILEGFAVVVEIPFSSRLISFLEGKEIVKSKNLRSIHSIFPFLEDKFPHLNYVLDILILHSIHLEILVQTLRYWVKDASSLHLLRFFLYEYRNWNSLITPKKSSFSFSKRNQRLFLFLYNYHVCEYESIFIFLRNQSSHLRSISSGTFFEQIDFYEKIEHFVEVFTKDFQAILWLCKDPFMHYIRYQGKSLLASKGKSLLMNKWKYYFVNFWQCYFYMWSQPGRIHINQLSNHSFDFLGYLSSVRLTPSMVRSQMLENSFLIGNAIKKFDTLVPIIPLIGSLSKAKFCNVLGHPISKPVWADLSDSDIIDRFGRIYRNLSHYYSGSSKKMNLYRIKYILRLSCARTLARKHKSTVRAFLKRLGSELLEEFFTEEERVFSLTFKKASSTSRGLYRRRIWYLDIICINDLANHK</sequence>
<organism>
    <name type="scientific">Manilkara zapota</name>
    <name type="common">Sapodilla plum</name>
    <name type="synonym">Achras zapota</name>
    <dbReference type="NCBI Taxonomy" id="3741"/>
    <lineage>
        <taxon>Eukaryota</taxon>
        <taxon>Viridiplantae</taxon>
        <taxon>Streptophyta</taxon>
        <taxon>Embryophyta</taxon>
        <taxon>Tracheophyta</taxon>
        <taxon>Spermatophyta</taxon>
        <taxon>Magnoliopsida</taxon>
        <taxon>eudicotyledons</taxon>
        <taxon>Gunneridae</taxon>
        <taxon>Pentapetalae</taxon>
        <taxon>asterids</taxon>
        <taxon>Ericales</taxon>
        <taxon>Sapotaceae</taxon>
        <taxon>Sapotoideae</taxon>
        <taxon>Manilkara</taxon>
    </lineage>
</organism>
<dbReference type="EMBL" id="AJ429295">
    <property type="protein sequence ID" value="CAD22191.1"/>
    <property type="molecule type" value="Genomic_DNA"/>
</dbReference>
<dbReference type="GO" id="GO:0009507">
    <property type="term" value="C:chloroplast"/>
    <property type="evidence" value="ECO:0007669"/>
    <property type="project" value="UniProtKB-SubCell"/>
</dbReference>
<dbReference type="GO" id="GO:0003723">
    <property type="term" value="F:RNA binding"/>
    <property type="evidence" value="ECO:0007669"/>
    <property type="project" value="UniProtKB-KW"/>
</dbReference>
<dbReference type="GO" id="GO:0006397">
    <property type="term" value="P:mRNA processing"/>
    <property type="evidence" value="ECO:0007669"/>
    <property type="project" value="UniProtKB-KW"/>
</dbReference>
<dbReference type="GO" id="GO:0008380">
    <property type="term" value="P:RNA splicing"/>
    <property type="evidence" value="ECO:0007669"/>
    <property type="project" value="UniProtKB-UniRule"/>
</dbReference>
<dbReference type="GO" id="GO:0008033">
    <property type="term" value="P:tRNA processing"/>
    <property type="evidence" value="ECO:0007669"/>
    <property type="project" value="UniProtKB-KW"/>
</dbReference>
<dbReference type="HAMAP" id="MF_01390">
    <property type="entry name" value="MatK"/>
    <property type="match status" value="1"/>
</dbReference>
<dbReference type="InterPro" id="IPR024937">
    <property type="entry name" value="Domain_X"/>
</dbReference>
<dbReference type="InterPro" id="IPR002866">
    <property type="entry name" value="Maturase_MatK"/>
</dbReference>
<dbReference type="InterPro" id="IPR024942">
    <property type="entry name" value="Maturase_MatK_N"/>
</dbReference>
<dbReference type="PANTHER" id="PTHR34811">
    <property type="entry name" value="MATURASE K"/>
    <property type="match status" value="1"/>
</dbReference>
<dbReference type="PANTHER" id="PTHR34811:SF1">
    <property type="entry name" value="MATURASE K"/>
    <property type="match status" value="1"/>
</dbReference>
<dbReference type="Pfam" id="PF01348">
    <property type="entry name" value="Intron_maturas2"/>
    <property type="match status" value="1"/>
</dbReference>
<dbReference type="Pfam" id="PF01824">
    <property type="entry name" value="MatK_N"/>
    <property type="match status" value="1"/>
</dbReference>
<evidence type="ECO:0000255" key="1">
    <source>
        <dbReference type="HAMAP-Rule" id="MF_01390"/>
    </source>
</evidence>
<accession>Q8M9A9</accession>
<name>MATK_MANZA</name>
<feature type="chain" id="PRO_0000143506" description="Maturase K">
    <location>
        <begin position="1"/>
        <end position="508"/>
    </location>
</feature>
<geneLocation type="chloroplast"/>
<proteinExistence type="inferred from homology"/>
<comment type="function">
    <text evidence="1">Usually encoded in the trnK tRNA gene intron. Probably assists in splicing its own and other chloroplast group II introns.</text>
</comment>
<comment type="subcellular location">
    <subcellularLocation>
        <location>Plastid</location>
        <location>Chloroplast</location>
    </subcellularLocation>
</comment>
<comment type="similarity">
    <text evidence="1">Belongs to the intron maturase 2 family. MatK subfamily.</text>
</comment>